<proteinExistence type="inferred from homology"/>
<name>LPXB_BURVG</name>
<gene>
    <name evidence="1" type="primary">lpxB</name>
    <name type="ordered locus">Bcep1808_1912</name>
</gene>
<accession>A4JF62</accession>
<sequence>MPLPTNQLRLAMVAGEPSGDLLAASLLGGLQARLPASTHYYGIGGQRMLAHGFDSHWQMDKLTVRGYVEALGQIPEILRIRGELKRQLLAERPDAFIGVDAPDFNFNVEQAARDAGIPSIHFVCPSIWAWRGGRIKKIAKSVDHMLCLFPFEPAILDKAGVASTYVGHPLADEIPLEPDTHGARIALGLPADGPVIAVLPGSRRSEIALIGPTFFAAMALMQEREPGVRFVMPAATPALRELLQPLVAAHPQLALTITDGRSQVAMTAADAILVKSGTVTLEAALLKKPMVISYKVPWLTGQIMRRQGYLPYVGLPNILAGRFVVPELLQHFATPEALADATLTQLRDDANRRTLTEVFTEMHLSLRQNTAAKAAEAVVRVLEQRKGRA</sequence>
<keyword id="KW-0328">Glycosyltransferase</keyword>
<keyword id="KW-0441">Lipid A biosynthesis</keyword>
<keyword id="KW-0444">Lipid biosynthesis</keyword>
<keyword id="KW-0443">Lipid metabolism</keyword>
<keyword id="KW-0808">Transferase</keyword>
<feature type="chain" id="PRO_1000049392" description="Lipid-A-disaccharide synthase">
    <location>
        <begin position="1"/>
        <end position="389"/>
    </location>
</feature>
<organism>
    <name type="scientific">Burkholderia vietnamiensis (strain G4 / LMG 22486)</name>
    <name type="common">Burkholderia cepacia (strain R1808)</name>
    <dbReference type="NCBI Taxonomy" id="269482"/>
    <lineage>
        <taxon>Bacteria</taxon>
        <taxon>Pseudomonadati</taxon>
        <taxon>Pseudomonadota</taxon>
        <taxon>Betaproteobacteria</taxon>
        <taxon>Burkholderiales</taxon>
        <taxon>Burkholderiaceae</taxon>
        <taxon>Burkholderia</taxon>
        <taxon>Burkholderia cepacia complex</taxon>
    </lineage>
</organism>
<dbReference type="EC" id="2.4.1.182" evidence="1"/>
<dbReference type="EMBL" id="CP000614">
    <property type="protein sequence ID" value="ABO54915.1"/>
    <property type="molecule type" value="Genomic_DNA"/>
</dbReference>
<dbReference type="SMR" id="A4JF62"/>
<dbReference type="CAZy" id="GT19">
    <property type="family name" value="Glycosyltransferase Family 19"/>
</dbReference>
<dbReference type="KEGG" id="bvi:Bcep1808_1912"/>
<dbReference type="eggNOG" id="COG0763">
    <property type="taxonomic scope" value="Bacteria"/>
</dbReference>
<dbReference type="HOGENOM" id="CLU_036577_3_0_4"/>
<dbReference type="UniPathway" id="UPA00973"/>
<dbReference type="Proteomes" id="UP000002287">
    <property type="component" value="Chromosome 1"/>
</dbReference>
<dbReference type="GO" id="GO:0016020">
    <property type="term" value="C:membrane"/>
    <property type="evidence" value="ECO:0007669"/>
    <property type="project" value="GOC"/>
</dbReference>
<dbReference type="GO" id="GO:0008915">
    <property type="term" value="F:lipid-A-disaccharide synthase activity"/>
    <property type="evidence" value="ECO:0007669"/>
    <property type="project" value="UniProtKB-UniRule"/>
</dbReference>
<dbReference type="GO" id="GO:0005543">
    <property type="term" value="F:phospholipid binding"/>
    <property type="evidence" value="ECO:0007669"/>
    <property type="project" value="TreeGrafter"/>
</dbReference>
<dbReference type="GO" id="GO:0009245">
    <property type="term" value="P:lipid A biosynthetic process"/>
    <property type="evidence" value="ECO:0007669"/>
    <property type="project" value="UniProtKB-UniRule"/>
</dbReference>
<dbReference type="HAMAP" id="MF_00392">
    <property type="entry name" value="LpxB"/>
    <property type="match status" value="1"/>
</dbReference>
<dbReference type="InterPro" id="IPR003835">
    <property type="entry name" value="Glyco_trans_19"/>
</dbReference>
<dbReference type="NCBIfam" id="TIGR00215">
    <property type="entry name" value="lpxB"/>
    <property type="match status" value="1"/>
</dbReference>
<dbReference type="PANTHER" id="PTHR30372">
    <property type="entry name" value="LIPID-A-DISACCHARIDE SYNTHASE"/>
    <property type="match status" value="1"/>
</dbReference>
<dbReference type="PANTHER" id="PTHR30372:SF4">
    <property type="entry name" value="LIPID-A-DISACCHARIDE SYNTHASE, MITOCHONDRIAL-RELATED"/>
    <property type="match status" value="1"/>
</dbReference>
<dbReference type="Pfam" id="PF02684">
    <property type="entry name" value="LpxB"/>
    <property type="match status" value="1"/>
</dbReference>
<dbReference type="SUPFAM" id="SSF53756">
    <property type="entry name" value="UDP-Glycosyltransferase/glycogen phosphorylase"/>
    <property type="match status" value="1"/>
</dbReference>
<reference key="1">
    <citation type="submission" date="2007-03" db="EMBL/GenBank/DDBJ databases">
        <title>Complete sequence of chromosome 1 of Burkholderia vietnamiensis G4.</title>
        <authorList>
            <consortium name="US DOE Joint Genome Institute"/>
            <person name="Copeland A."/>
            <person name="Lucas S."/>
            <person name="Lapidus A."/>
            <person name="Barry K."/>
            <person name="Detter J.C."/>
            <person name="Glavina del Rio T."/>
            <person name="Hammon N."/>
            <person name="Israni S."/>
            <person name="Dalin E."/>
            <person name="Tice H."/>
            <person name="Pitluck S."/>
            <person name="Chain P."/>
            <person name="Malfatti S."/>
            <person name="Shin M."/>
            <person name="Vergez L."/>
            <person name="Schmutz J."/>
            <person name="Larimer F."/>
            <person name="Land M."/>
            <person name="Hauser L."/>
            <person name="Kyrpides N."/>
            <person name="Tiedje J."/>
            <person name="Richardson P."/>
        </authorList>
    </citation>
    <scope>NUCLEOTIDE SEQUENCE [LARGE SCALE GENOMIC DNA]</scope>
    <source>
        <strain>G4 / LMG 22486</strain>
    </source>
</reference>
<evidence type="ECO:0000255" key="1">
    <source>
        <dbReference type="HAMAP-Rule" id="MF_00392"/>
    </source>
</evidence>
<protein>
    <recommendedName>
        <fullName evidence="1">Lipid-A-disaccharide synthase</fullName>
        <ecNumber evidence="1">2.4.1.182</ecNumber>
    </recommendedName>
</protein>
<comment type="function">
    <text evidence="1">Condensation of UDP-2,3-diacylglucosamine and 2,3-diacylglucosamine-1-phosphate to form lipid A disaccharide, a precursor of lipid A, a phosphorylated glycolipid that anchors the lipopolysaccharide to the outer membrane of the cell.</text>
</comment>
<comment type="catalytic activity">
    <reaction evidence="1">
        <text>a lipid X + a UDP-2-N,3-O-bis[(3R)-3-hydroxyacyl]-alpha-D-glucosamine = a lipid A disaccharide + UDP + H(+)</text>
        <dbReference type="Rhea" id="RHEA:67828"/>
        <dbReference type="ChEBI" id="CHEBI:15378"/>
        <dbReference type="ChEBI" id="CHEBI:58223"/>
        <dbReference type="ChEBI" id="CHEBI:137748"/>
        <dbReference type="ChEBI" id="CHEBI:176338"/>
        <dbReference type="ChEBI" id="CHEBI:176343"/>
        <dbReference type="EC" id="2.4.1.182"/>
    </reaction>
</comment>
<comment type="pathway">
    <text evidence="1">Bacterial outer membrane biogenesis; LPS lipid A biosynthesis.</text>
</comment>
<comment type="similarity">
    <text evidence="1">Belongs to the LpxB family.</text>
</comment>